<name>MEND_ECOLU</name>
<reference key="1">
    <citation type="journal article" date="2009" name="PLoS Genet.">
        <title>Organised genome dynamics in the Escherichia coli species results in highly diverse adaptive paths.</title>
        <authorList>
            <person name="Touchon M."/>
            <person name="Hoede C."/>
            <person name="Tenaillon O."/>
            <person name="Barbe V."/>
            <person name="Baeriswyl S."/>
            <person name="Bidet P."/>
            <person name="Bingen E."/>
            <person name="Bonacorsi S."/>
            <person name="Bouchier C."/>
            <person name="Bouvet O."/>
            <person name="Calteau A."/>
            <person name="Chiapello H."/>
            <person name="Clermont O."/>
            <person name="Cruveiller S."/>
            <person name="Danchin A."/>
            <person name="Diard M."/>
            <person name="Dossat C."/>
            <person name="Karoui M.E."/>
            <person name="Frapy E."/>
            <person name="Garry L."/>
            <person name="Ghigo J.M."/>
            <person name="Gilles A.M."/>
            <person name="Johnson J."/>
            <person name="Le Bouguenec C."/>
            <person name="Lescat M."/>
            <person name="Mangenot S."/>
            <person name="Martinez-Jehanne V."/>
            <person name="Matic I."/>
            <person name="Nassif X."/>
            <person name="Oztas S."/>
            <person name="Petit M.A."/>
            <person name="Pichon C."/>
            <person name="Rouy Z."/>
            <person name="Ruf C.S."/>
            <person name="Schneider D."/>
            <person name="Tourret J."/>
            <person name="Vacherie B."/>
            <person name="Vallenet D."/>
            <person name="Medigue C."/>
            <person name="Rocha E.P.C."/>
            <person name="Denamur E."/>
        </authorList>
    </citation>
    <scope>NUCLEOTIDE SEQUENCE [LARGE SCALE GENOMIC DNA]</scope>
    <source>
        <strain>UMN026 / ExPEC</strain>
    </source>
</reference>
<accession>B7N5N0</accession>
<dbReference type="EC" id="2.2.1.9" evidence="1"/>
<dbReference type="EMBL" id="CU928163">
    <property type="protein sequence ID" value="CAR13789.1"/>
    <property type="molecule type" value="Genomic_DNA"/>
</dbReference>
<dbReference type="RefSeq" id="WP_001306466.1">
    <property type="nucleotide sequence ID" value="NC_011751.1"/>
</dbReference>
<dbReference type="RefSeq" id="YP_002413317.1">
    <property type="nucleotide sequence ID" value="NC_011751.1"/>
</dbReference>
<dbReference type="SMR" id="B7N5N0"/>
<dbReference type="STRING" id="585056.ECUMN_2607"/>
<dbReference type="KEGG" id="eum:ECUMN_2607"/>
<dbReference type="PATRIC" id="fig|585056.7.peg.2787"/>
<dbReference type="HOGENOM" id="CLU_006051_3_0_6"/>
<dbReference type="UniPathway" id="UPA00079"/>
<dbReference type="UniPathway" id="UPA01057">
    <property type="reaction ID" value="UER00164"/>
</dbReference>
<dbReference type="Proteomes" id="UP000007097">
    <property type="component" value="Chromosome"/>
</dbReference>
<dbReference type="GO" id="GO:0070204">
    <property type="term" value="F:2-succinyl-5-enolpyruvyl-6-hydroxy-3-cyclohexene-1-carboxylic-acid synthase activity"/>
    <property type="evidence" value="ECO:0007669"/>
    <property type="project" value="UniProtKB-UniRule"/>
</dbReference>
<dbReference type="GO" id="GO:0000287">
    <property type="term" value="F:magnesium ion binding"/>
    <property type="evidence" value="ECO:0007669"/>
    <property type="project" value="UniProtKB-UniRule"/>
</dbReference>
<dbReference type="GO" id="GO:0030145">
    <property type="term" value="F:manganese ion binding"/>
    <property type="evidence" value="ECO:0007669"/>
    <property type="project" value="UniProtKB-UniRule"/>
</dbReference>
<dbReference type="GO" id="GO:0030976">
    <property type="term" value="F:thiamine pyrophosphate binding"/>
    <property type="evidence" value="ECO:0007669"/>
    <property type="project" value="UniProtKB-UniRule"/>
</dbReference>
<dbReference type="GO" id="GO:0009234">
    <property type="term" value="P:menaquinone biosynthetic process"/>
    <property type="evidence" value="ECO:0007669"/>
    <property type="project" value="UniProtKB-UniRule"/>
</dbReference>
<dbReference type="CDD" id="cd07037">
    <property type="entry name" value="TPP_PYR_MenD"/>
    <property type="match status" value="1"/>
</dbReference>
<dbReference type="CDD" id="cd02009">
    <property type="entry name" value="TPP_SHCHC_synthase"/>
    <property type="match status" value="1"/>
</dbReference>
<dbReference type="FunFam" id="3.40.50.970:FF:000029">
    <property type="entry name" value="2-succinyl-5-enolpyruvyl-6-hydroxy-3-cyclohexene-1-carboxylate synthase"/>
    <property type="match status" value="1"/>
</dbReference>
<dbReference type="Gene3D" id="3.40.50.970">
    <property type="match status" value="2"/>
</dbReference>
<dbReference type="Gene3D" id="3.40.50.1220">
    <property type="entry name" value="TPP-binding domain"/>
    <property type="match status" value="1"/>
</dbReference>
<dbReference type="HAMAP" id="MF_01659">
    <property type="entry name" value="MenD"/>
    <property type="match status" value="1"/>
</dbReference>
<dbReference type="InterPro" id="IPR004433">
    <property type="entry name" value="MenaQ_synth_MenD"/>
</dbReference>
<dbReference type="InterPro" id="IPR032264">
    <property type="entry name" value="MenD_middle"/>
</dbReference>
<dbReference type="InterPro" id="IPR029061">
    <property type="entry name" value="THDP-binding"/>
</dbReference>
<dbReference type="InterPro" id="IPR012001">
    <property type="entry name" value="Thiamin_PyroP_enz_TPP-bd_dom"/>
</dbReference>
<dbReference type="InterPro" id="IPR011766">
    <property type="entry name" value="TPP_enzyme_TPP-bd"/>
</dbReference>
<dbReference type="NCBIfam" id="TIGR00173">
    <property type="entry name" value="menD"/>
    <property type="match status" value="1"/>
</dbReference>
<dbReference type="PANTHER" id="PTHR42916">
    <property type="entry name" value="2-SUCCINYL-5-ENOLPYRUVYL-6-HYDROXY-3-CYCLOHEXENE-1-CARBOXYLATE SYNTHASE"/>
    <property type="match status" value="1"/>
</dbReference>
<dbReference type="PANTHER" id="PTHR42916:SF1">
    <property type="entry name" value="PROTEIN PHYLLO, CHLOROPLASTIC"/>
    <property type="match status" value="1"/>
</dbReference>
<dbReference type="Pfam" id="PF02775">
    <property type="entry name" value="TPP_enzyme_C"/>
    <property type="match status" value="1"/>
</dbReference>
<dbReference type="Pfam" id="PF16582">
    <property type="entry name" value="TPP_enzyme_M_2"/>
    <property type="match status" value="1"/>
</dbReference>
<dbReference type="Pfam" id="PF02776">
    <property type="entry name" value="TPP_enzyme_N"/>
    <property type="match status" value="1"/>
</dbReference>
<dbReference type="PIRSF" id="PIRSF004983">
    <property type="entry name" value="MenD"/>
    <property type="match status" value="1"/>
</dbReference>
<dbReference type="SUPFAM" id="SSF52518">
    <property type="entry name" value="Thiamin diphosphate-binding fold (THDP-binding)"/>
    <property type="match status" value="2"/>
</dbReference>
<gene>
    <name evidence="1" type="primary">menD</name>
    <name type="ordered locus">ECUMN_2607</name>
</gene>
<proteinExistence type="inferred from homology"/>
<comment type="function">
    <text evidence="1">Catalyzes the thiamine diphosphate-dependent decarboxylation of 2-oxoglutarate and the subsequent addition of the resulting succinic semialdehyde-thiamine pyrophosphate anion to isochorismate to yield 2-succinyl-5-enolpyruvyl-6-hydroxy-3-cyclohexene-1-carboxylate (SEPHCHC).</text>
</comment>
<comment type="catalytic activity">
    <reaction evidence="1">
        <text>isochorismate + 2-oxoglutarate + H(+) = 5-enolpyruvoyl-6-hydroxy-2-succinyl-cyclohex-3-ene-1-carboxylate + CO2</text>
        <dbReference type="Rhea" id="RHEA:25593"/>
        <dbReference type="ChEBI" id="CHEBI:15378"/>
        <dbReference type="ChEBI" id="CHEBI:16526"/>
        <dbReference type="ChEBI" id="CHEBI:16810"/>
        <dbReference type="ChEBI" id="CHEBI:29780"/>
        <dbReference type="ChEBI" id="CHEBI:58818"/>
        <dbReference type="EC" id="2.2.1.9"/>
    </reaction>
</comment>
<comment type="cofactor">
    <cofactor evidence="1">
        <name>Mg(2+)</name>
        <dbReference type="ChEBI" id="CHEBI:18420"/>
    </cofactor>
    <cofactor evidence="1">
        <name>Mn(2+)</name>
        <dbReference type="ChEBI" id="CHEBI:29035"/>
    </cofactor>
</comment>
<comment type="cofactor">
    <cofactor evidence="1">
        <name>thiamine diphosphate</name>
        <dbReference type="ChEBI" id="CHEBI:58937"/>
    </cofactor>
    <text evidence="1">Binds 1 thiamine pyrophosphate per subunit.</text>
</comment>
<comment type="pathway">
    <text evidence="1">Quinol/quinone metabolism; 1,4-dihydroxy-2-naphthoate biosynthesis; 1,4-dihydroxy-2-naphthoate from chorismate: step 2/7.</text>
</comment>
<comment type="pathway">
    <text evidence="1">Quinol/quinone metabolism; menaquinone biosynthesis.</text>
</comment>
<comment type="subunit">
    <text evidence="1">Homodimer.</text>
</comment>
<comment type="similarity">
    <text evidence="1">Belongs to the TPP enzyme family. MenD subfamily.</text>
</comment>
<organism>
    <name type="scientific">Escherichia coli O17:K52:H18 (strain UMN026 / ExPEC)</name>
    <dbReference type="NCBI Taxonomy" id="585056"/>
    <lineage>
        <taxon>Bacteria</taxon>
        <taxon>Pseudomonadati</taxon>
        <taxon>Pseudomonadota</taxon>
        <taxon>Gammaproteobacteria</taxon>
        <taxon>Enterobacterales</taxon>
        <taxon>Enterobacteriaceae</taxon>
        <taxon>Escherichia</taxon>
    </lineage>
</organism>
<protein>
    <recommendedName>
        <fullName evidence="1">2-succinyl-5-enolpyruvyl-6-hydroxy-3-cyclohexene-1-carboxylate synthase</fullName>
        <shortName evidence="1">SEPHCHC synthase</shortName>
        <ecNumber evidence="1">2.2.1.9</ecNumber>
    </recommendedName>
    <alternativeName>
        <fullName evidence="1">Menaquinone biosynthesis protein MenD</fullName>
    </alternativeName>
</protein>
<evidence type="ECO:0000255" key="1">
    <source>
        <dbReference type="HAMAP-Rule" id="MF_01659"/>
    </source>
</evidence>
<keyword id="KW-0460">Magnesium</keyword>
<keyword id="KW-0464">Manganese</keyword>
<keyword id="KW-0474">Menaquinone biosynthesis</keyword>
<keyword id="KW-0479">Metal-binding</keyword>
<keyword id="KW-0786">Thiamine pyrophosphate</keyword>
<keyword id="KW-0808">Transferase</keyword>
<sequence length="556" mass="61427">MSVSAFNRRWAAVILEALTRHGVRHICIAPGSRSTPLTLAAAENSAFIHHTHFDERGLGHLALGLAKVSKQPVAVIVTSGTAVANLYPALIEAGLTGEKLILLTADRPPELIDCGANQAIRQPGMFASHPTHSISLPRPTQDIPARWLVSTIDHALGTLHAGGVHINCPFAEPLYGEMDDTGLSWQQRLGDWWQDDKPWLREAPRLESEKQRDWFFWRQKRGVVVAGRMSAEEGKKVTLWAQTLGWPLIGDVLSQTGQPLPCADLWLGNAKAISELQQAQIVVQLGSSLTGKRLLQWQAICEPEEYWIVDDIEGRLDPAHHRGRRLIANIADWLEQHPAEKRQPWCVEIPRLAEQAMQAVIARRDAFGEAQLAHRISDYLPEQGQLFVGNSLVVRLIDALSQLPAGYPVYSNRGASGIDGLLSTAAGVQRASGKPTLAIVGDLSALYDLNALALLRQVSAPLVLIVVNNNGGQIFSLLPTPKNERERFYLMPQNVHFEHAAAMFELKYHRPQNWQELETALADAWRTPTTTVIEMVVNDTDGAQTLQQLLAQVSHL</sequence>
<feature type="chain" id="PRO_1000187075" description="2-succinyl-5-enolpyruvyl-6-hydroxy-3-cyclohexene-1-carboxylate synthase">
    <location>
        <begin position="1"/>
        <end position="556"/>
    </location>
</feature>